<proteinExistence type="inferred from homology"/>
<name>EFTS_ECOLU</name>
<sequence>MAEITASLVKELRERTGAGMMDCKKALTEANGDIELAIENMRKSGAIKAAKKAGNVAADGVIKTKIDGNYGIILEVNCQTDFVAKDAGFQAFADKVLDAAVAGKITDVEVLKAQFEEERVALVAKIGENINIRRVAALEGDVLGSYQHGARIGVLVAAKGADEELVKHIAMHVAASKPEFIKPEDVSAEVVEKEYQVQLDIAMQSGKPKEIAEKMVEGRMKKFTGEVSLTGQPFVMEPSKTVGQLLKEHNAEVTGFIRFEVGEGIEKVETDFAAEVAAMSKQS</sequence>
<comment type="function">
    <text evidence="1">Associates with the EF-Tu.GDP complex and induces the exchange of GDP to GTP. It remains bound to the aminoacyl-tRNA.EF-Tu.GTP complex up to the GTP hydrolysis stage on the ribosome.</text>
</comment>
<comment type="subcellular location">
    <subcellularLocation>
        <location evidence="1">Cytoplasm</location>
    </subcellularLocation>
</comment>
<comment type="similarity">
    <text evidence="1">Belongs to the EF-Ts family.</text>
</comment>
<protein>
    <recommendedName>
        <fullName evidence="1">Elongation factor Ts</fullName>
        <shortName evidence="1">EF-Ts</shortName>
    </recommendedName>
</protein>
<accession>B7N837</accession>
<reference key="1">
    <citation type="journal article" date="2009" name="PLoS Genet.">
        <title>Organised genome dynamics in the Escherichia coli species results in highly diverse adaptive paths.</title>
        <authorList>
            <person name="Touchon M."/>
            <person name="Hoede C."/>
            <person name="Tenaillon O."/>
            <person name="Barbe V."/>
            <person name="Baeriswyl S."/>
            <person name="Bidet P."/>
            <person name="Bingen E."/>
            <person name="Bonacorsi S."/>
            <person name="Bouchier C."/>
            <person name="Bouvet O."/>
            <person name="Calteau A."/>
            <person name="Chiapello H."/>
            <person name="Clermont O."/>
            <person name="Cruveiller S."/>
            <person name="Danchin A."/>
            <person name="Diard M."/>
            <person name="Dossat C."/>
            <person name="Karoui M.E."/>
            <person name="Frapy E."/>
            <person name="Garry L."/>
            <person name="Ghigo J.M."/>
            <person name="Gilles A.M."/>
            <person name="Johnson J."/>
            <person name="Le Bouguenec C."/>
            <person name="Lescat M."/>
            <person name="Mangenot S."/>
            <person name="Martinez-Jehanne V."/>
            <person name="Matic I."/>
            <person name="Nassif X."/>
            <person name="Oztas S."/>
            <person name="Petit M.A."/>
            <person name="Pichon C."/>
            <person name="Rouy Z."/>
            <person name="Ruf C.S."/>
            <person name="Schneider D."/>
            <person name="Tourret J."/>
            <person name="Vacherie B."/>
            <person name="Vallenet D."/>
            <person name="Medigue C."/>
            <person name="Rocha E.P.C."/>
            <person name="Denamur E."/>
        </authorList>
    </citation>
    <scope>NUCLEOTIDE SEQUENCE [LARGE SCALE GENOMIC DNA]</scope>
    <source>
        <strain>UMN026 / ExPEC</strain>
    </source>
</reference>
<gene>
    <name evidence="1" type="primary">tsf</name>
    <name type="ordered locus">ECUMN_0167</name>
</gene>
<keyword id="KW-0963">Cytoplasm</keyword>
<keyword id="KW-0251">Elongation factor</keyword>
<keyword id="KW-0648">Protein biosynthesis</keyword>
<organism>
    <name type="scientific">Escherichia coli O17:K52:H18 (strain UMN026 / ExPEC)</name>
    <dbReference type="NCBI Taxonomy" id="585056"/>
    <lineage>
        <taxon>Bacteria</taxon>
        <taxon>Pseudomonadati</taxon>
        <taxon>Pseudomonadota</taxon>
        <taxon>Gammaproteobacteria</taxon>
        <taxon>Enterobacterales</taxon>
        <taxon>Enterobacteriaceae</taxon>
        <taxon>Escherichia</taxon>
    </lineage>
</organism>
<dbReference type="EMBL" id="CU928163">
    <property type="protein sequence ID" value="CAR11387.1"/>
    <property type="molecule type" value="Genomic_DNA"/>
</dbReference>
<dbReference type="RefSeq" id="WP_000818114.1">
    <property type="nucleotide sequence ID" value="NC_011751.1"/>
</dbReference>
<dbReference type="RefSeq" id="YP_002410943.1">
    <property type="nucleotide sequence ID" value="NC_011751.1"/>
</dbReference>
<dbReference type="SMR" id="B7N837"/>
<dbReference type="STRING" id="585056.ECUMN_0167"/>
<dbReference type="GeneID" id="93777255"/>
<dbReference type="KEGG" id="eum:ECUMN_0167"/>
<dbReference type="PATRIC" id="fig|585056.7.peg.360"/>
<dbReference type="HOGENOM" id="CLU_047155_0_2_6"/>
<dbReference type="Proteomes" id="UP000007097">
    <property type="component" value="Chromosome"/>
</dbReference>
<dbReference type="GO" id="GO:0005737">
    <property type="term" value="C:cytoplasm"/>
    <property type="evidence" value="ECO:0007669"/>
    <property type="project" value="UniProtKB-SubCell"/>
</dbReference>
<dbReference type="GO" id="GO:0003746">
    <property type="term" value="F:translation elongation factor activity"/>
    <property type="evidence" value="ECO:0007669"/>
    <property type="project" value="UniProtKB-UniRule"/>
</dbReference>
<dbReference type="CDD" id="cd14275">
    <property type="entry name" value="UBA_EF-Ts"/>
    <property type="match status" value="1"/>
</dbReference>
<dbReference type="FunFam" id="1.10.286.20:FF:000001">
    <property type="entry name" value="Elongation factor Ts"/>
    <property type="match status" value="1"/>
</dbReference>
<dbReference type="FunFam" id="1.10.8.10:FF:000001">
    <property type="entry name" value="Elongation factor Ts"/>
    <property type="match status" value="1"/>
</dbReference>
<dbReference type="FunFam" id="3.30.479.20:FF:000001">
    <property type="entry name" value="Elongation factor Ts"/>
    <property type="match status" value="1"/>
</dbReference>
<dbReference type="Gene3D" id="1.10.286.20">
    <property type="match status" value="1"/>
</dbReference>
<dbReference type="Gene3D" id="1.10.8.10">
    <property type="entry name" value="DNA helicase RuvA subunit, C-terminal domain"/>
    <property type="match status" value="1"/>
</dbReference>
<dbReference type="Gene3D" id="3.30.479.20">
    <property type="entry name" value="Elongation factor Ts, dimerisation domain"/>
    <property type="match status" value="2"/>
</dbReference>
<dbReference type="HAMAP" id="MF_00050">
    <property type="entry name" value="EF_Ts"/>
    <property type="match status" value="1"/>
</dbReference>
<dbReference type="InterPro" id="IPR036402">
    <property type="entry name" value="EF-Ts_dimer_sf"/>
</dbReference>
<dbReference type="InterPro" id="IPR001816">
    <property type="entry name" value="Transl_elong_EFTs/EF1B"/>
</dbReference>
<dbReference type="InterPro" id="IPR014039">
    <property type="entry name" value="Transl_elong_EFTs/EF1B_dimer"/>
</dbReference>
<dbReference type="InterPro" id="IPR018101">
    <property type="entry name" value="Transl_elong_Ts_CS"/>
</dbReference>
<dbReference type="InterPro" id="IPR009060">
    <property type="entry name" value="UBA-like_sf"/>
</dbReference>
<dbReference type="NCBIfam" id="TIGR00116">
    <property type="entry name" value="tsf"/>
    <property type="match status" value="1"/>
</dbReference>
<dbReference type="PANTHER" id="PTHR11741">
    <property type="entry name" value="ELONGATION FACTOR TS"/>
    <property type="match status" value="1"/>
</dbReference>
<dbReference type="PANTHER" id="PTHR11741:SF0">
    <property type="entry name" value="ELONGATION FACTOR TS, MITOCHONDRIAL"/>
    <property type="match status" value="1"/>
</dbReference>
<dbReference type="Pfam" id="PF00889">
    <property type="entry name" value="EF_TS"/>
    <property type="match status" value="1"/>
</dbReference>
<dbReference type="SUPFAM" id="SSF54713">
    <property type="entry name" value="Elongation factor Ts (EF-Ts), dimerisation domain"/>
    <property type="match status" value="2"/>
</dbReference>
<dbReference type="SUPFAM" id="SSF46934">
    <property type="entry name" value="UBA-like"/>
    <property type="match status" value="1"/>
</dbReference>
<dbReference type="PROSITE" id="PS01126">
    <property type="entry name" value="EF_TS_1"/>
    <property type="match status" value="1"/>
</dbReference>
<dbReference type="PROSITE" id="PS01127">
    <property type="entry name" value="EF_TS_2"/>
    <property type="match status" value="1"/>
</dbReference>
<evidence type="ECO:0000255" key="1">
    <source>
        <dbReference type="HAMAP-Rule" id="MF_00050"/>
    </source>
</evidence>
<feature type="chain" id="PRO_1000116733" description="Elongation factor Ts">
    <location>
        <begin position="1"/>
        <end position="283"/>
    </location>
</feature>
<feature type="region of interest" description="Involved in Mg(2+) ion dislocation from EF-Tu" evidence="1">
    <location>
        <begin position="80"/>
        <end position="83"/>
    </location>
</feature>